<reference key="1">
    <citation type="journal article" date="2002" name="J. Biol. Chem.">
        <title>Characterization of a first domain of human high glycine-tyrosine and high sulfur keratin-associated protein (KAP) genes on chromosome 21q22.1.</title>
        <authorList>
            <person name="Rogers M.A."/>
            <person name="Langbein L."/>
            <person name="Winter H."/>
            <person name="Ehmann C."/>
            <person name="Praetzel S."/>
            <person name="Schweizer J."/>
        </authorList>
    </citation>
    <scope>NUCLEOTIDE SEQUENCE [MRNA]</scope>
    <source>
        <tissue>Scalp</tissue>
    </source>
</reference>
<reference key="2">
    <citation type="submission" date="2002-11" db="EMBL/GenBank/DDBJ databases">
        <title>Identification of complete keratin-associated protein (KAP) gene cluster spanning 800 kb region on human chromosome 21q22.11.</title>
        <authorList>
            <person name="Obayashi I."/>
            <person name="Shibuya K."/>
            <person name="Minoshima S."/>
            <person name="Kudoh J."/>
            <person name="Shimizu N."/>
        </authorList>
    </citation>
    <scope>NUCLEOTIDE SEQUENCE [MRNA]</scope>
    <source>
        <tissue>Hair</tissue>
    </source>
</reference>
<reference key="3">
    <citation type="journal article" date="2000" name="Nature">
        <title>The DNA sequence of human chromosome 21.</title>
        <authorList>
            <person name="Hattori M."/>
            <person name="Fujiyama A."/>
            <person name="Taylor T.D."/>
            <person name="Watanabe H."/>
            <person name="Yada T."/>
            <person name="Park H.-S."/>
            <person name="Toyoda A."/>
            <person name="Ishii K."/>
            <person name="Totoki Y."/>
            <person name="Choi D.-K."/>
            <person name="Groner Y."/>
            <person name="Soeda E."/>
            <person name="Ohki M."/>
            <person name="Takagi T."/>
            <person name="Sakaki Y."/>
            <person name="Taudien S."/>
            <person name="Blechschmidt K."/>
            <person name="Polley A."/>
            <person name="Menzel U."/>
            <person name="Delabar J."/>
            <person name="Kumpf K."/>
            <person name="Lehmann R."/>
            <person name="Patterson D."/>
            <person name="Reichwald K."/>
            <person name="Rump A."/>
            <person name="Schillhabel M."/>
            <person name="Schudy A."/>
            <person name="Zimmermann W."/>
            <person name="Rosenthal A."/>
            <person name="Kudoh J."/>
            <person name="Shibuya K."/>
            <person name="Kawasaki K."/>
            <person name="Asakawa S."/>
            <person name="Shintani A."/>
            <person name="Sasaki T."/>
            <person name="Nagamine K."/>
            <person name="Mitsuyama S."/>
            <person name="Antonarakis S.E."/>
            <person name="Minoshima S."/>
            <person name="Shimizu N."/>
            <person name="Nordsiek G."/>
            <person name="Hornischer K."/>
            <person name="Brandt P."/>
            <person name="Scharfe M."/>
            <person name="Schoen O."/>
            <person name="Desario A."/>
            <person name="Reichelt J."/>
            <person name="Kauer G."/>
            <person name="Bloecker H."/>
            <person name="Ramser J."/>
            <person name="Beck A."/>
            <person name="Klages S."/>
            <person name="Hennig S."/>
            <person name="Riesselmann L."/>
            <person name="Dagand E."/>
            <person name="Wehrmeyer S."/>
            <person name="Borzym K."/>
            <person name="Gardiner K."/>
            <person name="Nizetic D."/>
            <person name="Francis F."/>
            <person name="Lehrach H."/>
            <person name="Reinhardt R."/>
            <person name="Yaspo M.-L."/>
        </authorList>
    </citation>
    <scope>NUCLEOTIDE SEQUENCE [LARGE SCALE GENOMIC DNA]</scope>
</reference>
<feature type="chain" id="PRO_0000185182" description="Keratin-associated protein 7-1">
    <location>
        <begin position="1"/>
        <end position="87"/>
    </location>
</feature>
<feature type="region of interest" description="11 X 2 AA repeats of G-[YCGS]">
    <location>
        <begin position="43"/>
        <end position="84"/>
    </location>
</feature>
<keyword id="KW-0416">Keratin</keyword>
<keyword id="KW-1267">Proteomics identification</keyword>
<keyword id="KW-1185">Reference proteome</keyword>
<keyword id="KW-0677">Repeat</keyword>
<accession>Q8IUC3</accession>
<accession>Q3LI56</accession>
<evidence type="ECO:0000305" key="1"/>
<name>KRA71_HUMAN</name>
<protein>
    <recommendedName>
        <fullName>Keratin-associated protein 7-1</fullName>
    </recommendedName>
    <alternativeName>
        <fullName>High tyrosine-glycine keratin-associated protein 7.1</fullName>
    </alternativeName>
</protein>
<sequence>MTRYFCCGSYFPGYPIYGTNFHGTFRATPLNCVVPLGSPLNYGCGCNGYSSLGYSFGGSNINNLGGCYGGSFYRPWGSGSGFGYSTY</sequence>
<gene>
    <name type="primary">KRTAP7-1</name>
    <name type="synonym">KAP7.1</name>
    <name type="synonym">KRTAP7.1</name>
</gene>
<organism>
    <name type="scientific">Homo sapiens</name>
    <name type="common">Human</name>
    <dbReference type="NCBI Taxonomy" id="9606"/>
    <lineage>
        <taxon>Eukaryota</taxon>
        <taxon>Metazoa</taxon>
        <taxon>Chordata</taxon>
        <taxon>Craniata</taxon>
        <taxon>Vertebrata</taxon>
        <taxon>Euteleostomi</taxon>
        <taxon>Mammalia</taxon>
        <taxon>Eutheria</taxon>
        <taxon>Euarchontoglires</taxon>
        <taxon>Primates</taxon>
        <taxon>Haplorrhini</taxon>
        <taxon>Catarrhini</taxon>
        <taxon>Hominidae</taxon>
        <taxon>Homo</taxon>
    </lineage>
</organism>
<dbReference type="EMBL" id="AJ457063">
    <property type="protein sequence ID" value="CAD29719.1"/>
    <property type="molecule type" value="mRNA"/>
</dbReference>
<dbReference type="EMBL" id="AB096962">
    <property type="protein sequence ID" value="BAE46377.1"/>
    <property type="molecule type" value="mRNA"/>
</dbReference>
<dbReference type="EMBL" id="AP001709">
    <property type="status" value="NOT_ANNOTATED_CDS"/>
    <property type="molecule type" value="Genomic_DNA"/>
</dbReference>
<dbReference type="CCDS" id="CCDS74780.1"/>
<dbReference type="RefSeq" id="NP_853637.2">
    <property type="nucleotide sequence ID" value="NM_181606.2"/>
</dbReference>
<dbReference type="BioGRID" id="130624">
    <property type="interactions" value="37"/>
</dbReference>
<dbReference type="FunCoup" id="Q8IUC3">
    <property type="interactions" value="10"/>
</dbReference>
<dbReference type="IntAct" id="Q8IUC3">
    <property type="interactions" value="36"/>
</dbReference>
<dbReference type="STRING" id="9606.ENSP00000479656"/>
<dbReference type="PhosphoSitePlus" id="Q8IUC3"/>
<dbReference type="BioMuta" id="KRTAP7-1"/>
<dbReference type="MassIVE" id="Q8IUC3"/>
<dbReference type="PaxDb" id="9606-ENSP00000479656"/>
<dbReference type="PeptideAtlas" id="Q8IUC3"/>
<dbReference type="ProteomicsDB" id="70542"/>
<dbReference type="DNASU" id="337878"/>
<dbReference type="Ensembl" id="ENST00000621162.1">
    <property type="protein sequence ID" value="ENSP00000479656.1"/>
    <property type="gene ID" value="ENSG00000274749.1"/>
</dbReference>
<dbReference type="GeneID" id="337878"/>
<dbReference type="KEGG" id="hsa:337878"/>
<dbReference type="MANE-Select" id="ENST00000621162.1">
    <property type="protein sequence ID" value="ENSP00000479656.1"/>
    <property type="RefSeq nucleotide sequence ID" value="NM_181606.3"/>
    <property type="RefSeq protein sequence ID" value="NP_853637.2"/>
</dbReference>
<dbReference type="UCSC" id="uc032pxy.2">
    <property type="organism name" value="human"/>
</dbReference>
<dbReference type="AGR" id="HGNC:18934"/>
<dbReference type="CTD" id="337878"/>
<dbReference type="GeneCards" id="KRTAP7-1"/>
<dbReference type="HGNC" id="HGNC:18934">
    <property type="gene designation" value="KRTAP7-1"/>
</dbReference>
<dbReference type="HPA" id="ENSG00000274749">
    <property type="expression patterns" value="Tissue enriched (skin)"/>
</dbReference>
<dbReference type="neXtProt" id="NX_Q8IUC3"/>
<dbReference type="OpenTargets" id="ENSG00000274749"/>
<dbReference type="PharmGKB" id="PA134993282"/>
<dbReference type="VEuPathDB" id="HostDB:ENSG00000274749"/>
<dbReference type="eggNOG" id="ENOG502TDVI">
    <property type="taxonomic scope" value="Eukaryota"/>
</dbReference>
<dbReference type="GeneTree" id="ENSGT00390000015202"/>
<dbReference type="HOGENOM" id="CLU_2482768_0_0_1"/>
<dbReference type="InParanoid" id="Q8IUC3"/>
<dbReference type="OMA" id="FCCGNYF"/>
<dbReference type="OrthoDB" id="9794157at2759"/>
<dbReference type="PAN-GO" id="Q8IUC3">
    <property type="GO annotations" value="0 GO annotations based on evolutionary models"/>
</dbReference>
<dbReference type="PhylomeDB" id="Q8IUC3"/>
<dbReference type="PathwayCommons" id="Q8IUC3"/>
<dbReference type="SignaLink" id="Q8IUC3"/>
<dbReference type="BioGRID-ORCS" id="337878">
    <property type="hits" value="4 hits in 213 CRISPR screens"/>
</dbReference>
<dbReference type="GenomeRNAi" id="337878"/>
<dbReference type="Pharos" id="Q8IUC3">
    <property type="development level" value="Tdark"/>
</dbReference>
<dbReference type="PRO" id="PR:Q8IUC3"/>
<dbReference type="Proteomes" id="UP000005640">
    <property type="component" value="Chromosome 21"/>
</dbReference>
<dbReference type="RNAct" id="Q8IUC3">
    <property type="molecule type" value="protein"/>
</dbReference>
<dbReference type="Bgee" id="ENSG00000274749">
    <property type="expression patterns" value="Expressed in amniotic fluid and 23 other cell types or tissues"/>
</dbReference>
<dbReference type="GO" id="GO:0005882">
    <property type="term" value="C:intermediate filament"/>
    <property type="evidence" value="ECO:0007669"/>
    <property type="project" value="UniProtKB-KW"/>
</dbReference>
<dbReference type="InterPro" id="IPR020184">
    <property type="entry name" value="KRTAP7"/>
</dbReference>
<dbReference type="PANTHER" id="PTHR38504">
    <property type="entry name" value="KERATIN-ASSOCIATED PROTEIN 7-1"/>
    <property type="match status" value="1"/>
</dbReference>
<dbReference type="PANTHER" id="PTHR38504:SF1">
    <property type="entry name" value="KERATIN-ASSOCIATED PROTEIN 7-1"/>
    <property type="match status" value="1"/>
</dbReference>
<dbReference type="Pfam" id="PF15034">
    <property type="entry name" value="KRTAP7"/>
    <property type="match status" value="1"/>
</dbReference>
<comment type="function">
    <text>In the hair cortex, hair keratin intermediate filaments are embedded in an interfilamentous matrix, consisting of hair keratin-associated proteins (KRTAP), which are essential for the formation of a rigid and resistant hair shaft through their extensive disulfide bond cross-linking with abundant cysteine residues of hair keratins. The matrix proteins include the high-sulfur and high-glycine-tyrosine keratins.</text>
</comment>
<comment type="subunit">
    <text>Interacts with hair keratins.</text>
</comment>
<comment type="interaction">
    <interactant intactId="EBI-18394498">
        <id>Q8IUC3</id>
    </interactant>
    <interactant intactId="EBI-948603">
        <id>Q03989</id>
        <label>ARID5A</label>
    </interactant>
    <organismsDiffer>false</organismsDiffer>
    <experiments>3</experiments>
</comment>
<comment type="interaction">
    <interactant intactId="EBI-18394498">
        <id>Q8IUC3</id>
    </interactant>
    <interactant intactId="EBI-946029">
        <id>Q6P1W5</id>
        <label>C1orf94</label>
    </interactant>
    <organismsDiffer>false</organismsDiffer>
    <experiments>3</experiments>
</comment>
<comment type="interaction">
    <interactant intactId="EBI-18394498">
        <id>Q8IUC3</id>
    </interactant>
    <interactant intactId="EBI-12139335">
        <id>Q8N6W0</id>
        <label>CELF5</label>
    </interactant>
    <organismsDiffer>false</organismsDiffer>
    <experiments>3</experiments>
</comment>
<comment type="interaction">
    <interactant intactId="EBI-18394498">
        <id>Q8IUC3</id>
    </interactant>
    <interactant intactId="EBI-10192698">
        <id>Q02930-3</id>
        <label>CREB5</label>
    </interactant>
    <organismsDiffer>false</organismsDiffer>
    <experiments>3</experiments>
</comment>
<comment type="interaction">
    <interactant intactId="EBI-18394498">
        <id>Q8IUC3</id>
    </interactant>
    <interactant intactId="EBI-750444">
        <id>P53672</id>
        <label>CRYBA2</label>
    </interactant>
    <organismsDiffer>false</organismsDiffer>
    <experiments>3</experiments>
</comment>
<comment type="interaction">
    <interactant intactId="EBI-18394498">
        <id>Q8IUC3</id>
    </interactant>
    <interactant intactId="EBI-740376">
        <id>Q86UW9</id>
        <label>DTX2</label>
    </interactant>
    <organismsDiffer>false</organismsDiffer>
    <experiments>3</experiments>
</comment>
<comment type="interaction">
    <interactant intactId="EBI-18394498">
        <id>Q8IUC3</id>
    </interactant>
    <interactant intactId="EBI-11978259">
        <id>Q92567-2</id>
        <label>FAM168A</label>
    </interactant>
    <organismsDiffer>false</organismsDiffer>
    <experiments>3</experiments>
</comment>
<comment type="interaction">
    <interactant intactId="EBI-18394498">
        <id>Q8IUC3</id>
    </interactant>
    <interactant intactId="EBI-1759806">
        <id>O75593</id>
        <label>FOXH1</label>
    </interactant>
    <organismsDiffer>false</organismsDiffer>
    <experiments>3</experiments>
</comment>
<comment type="interaction">
    <interactant intactId="EBI-18394498">
        <id>Q8IUC3</id>
    </interactant>
    <interactant intactId="EBI-2806671">
        <id>P23769</id>
        <label>GATA2</label>
    </interactant>
    <organismsDiffer>false</organismsDiffer>
    <experiments>3</experiments>
</comment>
<comment type="interaction">
    <interactant intactId="EBI-18394498">
        <id>Q8IUC3</id>
    </interactant>
    <interactant intactId="EBI-10188645">
        <id>O75603</id>
        <label>GCM2</label>
    </interactant>
    <organismsDiffer>false</organismsDiffer>
    <experiments>3</experiments>
</comment>
<comment type="interaction">
    <interactant intactId="EBI-18394498">
        <id>Q8IUC3</id>
    </interactant>
    <interactant intactId="EBI-740220">
        <id>O14964</id>
        <label>HGS</label>
    </interactant>
    <organismsDiffer>false</organismsDiffer>
    <experiments>3</experiments>
</comment>
<comment type="interaction">
    <interactant intactId="EBI-18394498">
        <id>Q8IUC3</id>
    </interactant>
    <interactant intactId="EBI-352986">
        <id>P52597</id>
        <label>HNRNPF</label>
    </interactant>
    <organismsDiffer>false</organismsDiffer>
    <experiments>3</experiments>
</comment>
<comment type="interaction">
    <interactant intactId="EBI-18394498">
        <id>Q8IUC3</id>
    </interactant>
    <interactant intactId="EBI-2340269">
        <id>Q13064</id>
        <label>MKRN3</label>
    </interactant>
    <organismsDiffer>false</organismsDiffer>
    <experiments>3</experiments>
</comment>
<comment type="interaction">
    <interactant intactId="EBI-18394498">
        <id>Q8IUC3</id>
    </interactant>
    <interactant intactId="EBI-5662487">
        <id>Q8TDC0</id>
        <label>MYOZ3</label>
    </interactant>
    <organismsDiffer>false</organismsDiffer>
    <experiments>3</experiments>
</comment>
<comment type="interaction">
    <interactant intactId="EBI-18394498">
        <id>Q8IUC3</id>
    </interactant>
    <interactant intactId="EBI-740446">
        <id>P32242</id>
        <label>OTX1</label>
    </interactant>
    <organismsDiffer>false</organismsDiffer>
    <experiments>3</experiments>
</comment>
<comment type="interaction">
    <interactant intactId="EBI-18394498">
        <id>Q8IUC3</id>
    </interactant>
    <interactant intactId="EBI-748265">
        <id>P78337</id>
        <label>PITX1</label>
    </interactant>
    <organismsDiffer>false</organismsDiffer>
    <experiments>3</experiments>
</comment>
<comment type="interaction">
    <interactant intactId="EBI-18394498">
        <id>Q8IUC3</id>
    </interactant>
    <interactant intactId="EBI-12138495">
        <id>Q99697-2</id>
        <label>PITX2</label>
    </interactant>
    <organismsDiffer>false</organismsDiffer>
    <experiments>3</experiments>
</comment>
<comment type="interaction">
    <interactant intactId="EBI-18394498">
        <id>Q8IUC3</id>
    </interactant>
    <interactant intactId="EBI-740924">
        <id>Q9NZ81</id>
        <label>PRR13</label>
    </interactant>
    <organismsDiffer>false</organismsDiffer>
    <experiments>3</experiments>
</comment>
<comment type="interaction">
    <interactant intactId="EBI-18394498">
        <id>Q8IUC3</id>
    </interactant>
    <interactant intactId="EBI-372273">
        <id>P20618</id>
        <label>PSMB1</label>
    </interactant>
    <organismsDiffer>false</organismsDiffer>
    <experiments>3</experiments>
</comment>
<comment type="interaction">
    <interactant intactId="EBI-18394498">
        <id>Q8IUC3</id>
    </interactant>
    <interactant intactId="EBI-372094">
        <id>Q9BQY4</id>
        <label>RHOXF2</label>
    </interactant>
    <organismsDiffer>false</organismsDiffer>
    <experiments>3</experiments>
</comment>
<comment type="interaction">
    <interactant intactId="EBI-18394498">
        <id>Q8IUC3</id>
    </interactant>
    <interactant intactId="EBI-2341200">
        <id>Q9H0F5</id>
        <label>RNF38</label>
    </interactant>
    <organismsDiffer>false</organismsDiffer>
    <experiments>3</experiments>
</comment>
<comment type="interaction">
    <interactant intactId="EBI-18394498">
        <id>Q8IUC3</id>
    </interactant>
    <interactant intactId="EBI-6422642">
        <id>Q01974</id>
        <label>ROR2</label>
    </interactant>
    <organismsDiffer>false</organismsDiffer>
    <experiments>3</experiments>
</comment>
<comment type="interaction">
    <interactant intactId="EBI-18394498">
        <id>Q8IUC3</id>
    </interactant>
    <interactant intactId="EBI-9843813">
        <id>Q9H0F6-2</id>
        <label>SHARPIN</label>
    </interactant>
    <organismsDiffer>false</organismsDiffer>
    <experiments>3</experiments>
</comment>
<comment type="interaction">
    <interactant intactId="EBI-18394498">
        <id>Q8IUC3</id>
    </interactant>
    <interactant intactId="EBI-355653">
        <id>Q92922</id>
        <label>SMARCC1</label>
    </interactant>
    <organismsDiffer>false</organismsDiffer>
    <experiments>3</experiments>
</comment>
<comment type="interaction">
    <interactant intactId="EBI-18394498">
        <id>Q8IUC3</id>
    </interactant>
    <interactant intactId="EBI-766589">
        <id>P09234</id>
        <label>SNRPC</label>
    </interactant>
    <organismsDiffer>false</organismsDiffer>
    <experiments>3</experiments>
</comment>
<comment type="interaction">
    <interactant intactId="EBI-18394498">
        <id>Q8IUC3</id>
    </interactant>
    <interactant intactId="EBI-11959123">
        <id>Q99932-2</id>
        <label>SPAG8</label>
    </interactant>
    <organismsDiffer>false</organismsDiffer>
    <experiments>3</experiments>
</comment>
<comment type="interaction">
    <interactant intactId="EBI-18394498">
        <id>Q8IUC3</id>
    </interactant>
    <interactant intactId="EBI-11746252">
        <id>Q9NQB0-10</id>
        <label>TCF7L2</label>
    </interactant>
    <organismsDiffer>false</organismsDiffer>
    <experiments>3</experiments>
</comment>
<comment type="interaction">
    <interactant intactId="EBI-18394498">
        <id>Q8IUC3</id>
    </interactant>
    <interactant intactId="EBI-750487">
        <id>Q8WW24</id>
        <label>TEKT4</label>
    </interactant>
    <organismsDiffer>false</organismsDiffer>
    <experiments>3</experiments>
</comment>
<comment type="interaction">
    <interactant intactId="EBI-18394498">
        <id>Q8IUC3</id>
    </interactant>
    <interactant intactId="EBI-11952651">
        <id>Q7Z6R9</id>
        <label>TFAP2D</label>
    </interactant>
    <organismsDiffer>false</organismsDiffer>
    <experiments>3</experiments>
</comment>
<comment type="interaction">
    <interactant intactId="EBI-18394498">
        <id>Q8IUC3</id>
    </interactant>
    <interactant intactId="EBI-11741437">
        <id>Q08117-2</id>
        <label>TLE5</label>
    </interactant>
    <organismsDiffer>false</organismsDiffer>
    <experiments>3</experiments>
</comment>
<comment type="interaction">
    <interactant intactId="EBI-18394498">
        <id>Q8IUC3</id>
    </interactant>
    <interactant intactId="EBI-3939165">
        <id>O43711</id>
        <label>TLX3</label>
    </interactant>
    <organismsDiffer>false</organismsDiffer>
    <experiments>3</experiments>
</comment>
<comment type="interaction">
    <interactant intactId="EBI-18394498">
        <id>Q8IUC3</id>
    </interactant>
    <interactant intactId="EBI-74615">
        <id>Q9H0E2</id>
        <label>TOLLIP</label>
    </interactant>
    <organismsDiffer>false</organismsDiffer>
    <experiments>3</experiments>
</comment>
<comment type="interaction">
    <interactant intactId="EBI-18394498">
        <id>Q8IUC3</id>
    </interactant>
    <interactant intactId="EBI-2559305">
        <id>A5D8V6</id>
        <label>VPS37C</label>
    </interactant>
    <organismsDiffer>false</organismsDiffer>
    <experiments>3</experiments>
</comment>
<comment type="interaction">
    <interactant intactId="EBI-18394498">
        <id>Q8IUC3</id>
    </interactant>
    <interactant intactId="EBI-1051237">
        <id>Q9BYJ9</id>
        <label>YTHDF1</label>
    </interactant>
    <organismsDiffer>false</organismsDiffer>
    <experiments>3</experiments>
</comment>
<comment type="interaction">
    <interactant intactId="EBI-18394498">
        <id>Q8IUC3</id>
    </interactant>
    <interactant intactId="EBI-11963196">
        <id>Q15915</id>
        <label>ZIC1</label>
    </interactant>
    <organismsDiffer>false</organismsDiffer>
    <experiments>3</experiments>
</comment>
<comment type="interaction">
    <interactant intactId="EBI-18394498">
        <id>Q8IUC3</id>
    </interactant>
    <interactant intactId="EBI-10211777">
        <id>A0A384ME25</id>
    </interactant>
    <organismsDiffer>false</organismsDiffer>
    <experiments>3</experiments>
</comment>
<comment type="tissue specificity">
    <text>Expressed in the upper portion of the hair cortex.</text>
</comment>
<comment type="similarity">
    <text evidence="1">Belongs to the KRTAP type 7 family.</text>
</comment>
<comment type="caution">
    <text evidence="1">The sequence of 1-36 of PubMed:12359730 has not been submitted.</text>
</comment>
<proteinExistence type="evidence at protein level"/>